<feature type="chain" id="PRO_0000263871" description="Translation initiation factor IF-1">
    <location>
        <begin position="1"/>
        <end position="72"/>
    </location>
</feature>
<feature type="domain" description="S1-like" evidence="1">
    <location>
        <begin position="1"/>
        <end position="72"/>
    </location>
</feature>
<sequence>MAKEDNIEMQGTVLETLPNTMFRVELENGHVVTAHISGKMRKNYIRILTGDKVTVELTPYDLSKGRIVFRSR</sequence>
<organism>
    <name type="scientific">Shigella dysenteriae serotype 1 (strain Sd197)</name>
    <dbReference type="NCBI Taxonomy" id="300267"/>
    <lineage>
        <taxon>Bacteria</taxon>
        <taxon>Pseudomonadati</taxon>
        <taxon>Pseudomonadota</taxon>
        <taxon>Gammaproteobacteria</taxon>
        <taxon>Enterobacterales</taxon>
        <taxon>Enterobacteriaceae</taxon>
        <taxon>Shigella</taxon>
    </lineage>
</organism>
<dbReference type="EMBL" id="CP000034">
    <property type="protein sequence ID" value="ABB62452.1"/>
    <property type="molecule type" value="Genomic_DNA"/>
</dbReference>
<dbReference type="RefSeq" id="WP_001040187.1">
    <property type="nucleotide sequence ID" value="NC_007606.1"/>
</dbReference>
<dbReference type="RefSeq" id="YP_403943.1">
    <property type="nucleotide sequence ID" value="NC_007606.1"/>
</dbReference>
<dbReference type="SMR" id="Q32E03"/>
<dbReference type="STRING" id="300267.SDY_2377"/>
<dbReference type="EnsemblBacteria" id="ABB62452">
    <property type="protein sequence ID" value="ABB62452"/>
    <property type="gene ID" value="SDY_2377"/>
</dbReference>
<dbReference type="GeneID" id="93776536"/>
<dbReference type="KEGG" id="sdy:SDY_2377"/>
<dbReference type="PATRIC" id="fig|300267.13.peg.2871"/>
<dbReference type="HOGENOM" id="CLU_151267_1_0_6"/>
<dbReference type="PRO" id="PR:Q32E03"/>
<dbReference type="Proteomes" id="UP000002716">
    <property type="component" value="Chromosome"/>
</dbReference>
<dbReference type="GO" id="GO:0005829">
    <property type="term" value="C:cytosol"/>
    <property type="evidence" value="ECO:0007669"/>
    <property type="project" value="TreeGrafter"/>
</dbReference>
<dbReference type="GO" id="GO:0043022">
    <property type="term" value="F:ribosome binding"/>
    <property type="evidence" value="ECO:0007669"/>
    <property type="project" value="UniProtKB-UniRule"/>
</dbReference>
<dbReference type="GO" id="GO:0019843">
    <property type="term" value="F:rRNA binding"/>
    <property type="evidence" value="ECO:0007669"/>
    <property type="project" value="UniProtKB-UniRule"/>
</dbReference>
<dbReference type="GO" id="GO:0003743">
    <property type="term" value="F:translation initiation factor activity"/>
    <property type="evidence" value="ECO:0007669"/>
    <property type="project" value="UniProtKB-UniRule"/>
</dbReference>
<dbReference type="CDD" id="cd04451">
    <property type="entry name" value="S1_IF1"/>
    <property type="match status" value="1"/>
</dbReference>
<dbReference type="FunFam" id="2.40.50.140:FF:000002">
    <property type="entry name" value="Translation initiation factor IF-1"/>
    <property type="match status" value="1"/>
</dbReference>
<dbReference type="Gene3D" id="2.40.50.140">
    <property type="entry name" value="Nucleic acid-binding proteins"/>
    <property type="match status" value="1"/>
</dbReference>
<dbReference type="HAMAP" id="MF_00075">
    <property type="entry name" value="IF_1"/>
    <property type="match status" value="1"/>
</dbReference>
<dbReference type="InterPro" id="IPR012340">
    <property type="entry name" value="NA-bd_OB-fold"/>
</dbReference>
<dbReference type="InterPro" id="IPR006196">
    <property type="entry name" value="RNA-binding_domain_S1_IF1"/>
</dbReference>
<dbReference type="InterPro" id="IPR003029">
    <property type="entry name" value="S1_domain"/>
</dbReference>
<dbReference type="InterPro" id="IPR004368">
    <property type="entry name" value="TIF_IF1"/>
</dbReference>
<dbReference type="NCBIfam" id="TIGR00008">
    <property type="entry name" value="infA"/>
    <property type="match status" value="1"/>
</dbReference>
<dbReference type="PANTHER" id="PTHR33370">
    <property type="entry name" value="TRANSLATION INITIATION FACTOR IF-1, CHLOROPLASTIC"/>
    <property type="match status" value="1"/>
</dbReference>
<dbReference type="PANTHER" id="PTHR33370:SF1">
    <property type="entry name" value="TRANSLATION INITIATION FACTOR IF-1, CHLOROPLASTIC"/>
    <property type="match status" value="1"/>
</dbReference>
<dbReference type="Pfam" id="PF01176">
    <property type="entry name" value="eIF-1a"/>
    <property type="match status" value="1"/>
</dbReference>
<dbReference type="SMART" id="SM00316">
    <property type="entry name" value="S1"/>
    <property type="match status" value="1"/>
</dbReference>
<dbReference type="SUPFAM" id="SSF50249">
    <property type="entry name" value="Nucleic acid-binding proteins"/>
    <property type="match status" value="1"/>
</dbReference>
<dbReference type="PROSITE" id="PS50832">
    <property type="entry name" value="S1_IF1_TYPE"/>
    <property type="match status" value="1"/>
</dbReference>
<reference key="1">
    <citation type="journal article" date="2005" name="Nucleic Acids Res.">
        <title>Genome dynamics and diversity of Shigella species, the etiologic agents of bacillary dysentery.</title>
        <authorList>
            <person name="Yang F."/>
            <person name="Yang J."/>
            <person name="Zhang X."/>
            <person name="Chen L."/>
            <person name="Jiang Y."/>
            <person name="Yan Y."/>
            <person name="Tang X."/>
            <person name="Wang J."/>
            <person name="Xiong Z."/>
            <person name="Dong J."/>
            <person name="Xue Y."/>
            <person name="Zhu Y."/>
            <person name="Xu X."/>
            <person name="Sun L."/>
            <person name="Chen S."/>
            <person name="Nie H."/>
            <person name="Peng J."/>
            <person name="Xu J."/>
            <person name="Wang Y."/>
            <person name="Yuan Z."/>
            <person name="Wen Y."/>
            <person name="Yao Z."/>
            <person name="Shen Y."/>
            <person name="Qiang B."/>
            <person name="Hou Y."/>
            <person name="Yu J."/>
            <person name="Jin Q."/>
        </authorList>
    </citation>
    <scope>NUCLEOTIDE SEQUENCE [LARGE SCALE GENOMIC DNA]</scope>
    <source>
        <strain>Sd197</strain>
    </source>
</reference>
<protein>
    <recommendedName>
        <fullName evidence="1">Translation initiation factor IF-1</fullName>
    </recommendedName>
</protein>
<evidence type="ECO:0000255" key="1">
    <source>
        <dbReference type="HAMAP-Rule" id="MF_00075"/>
    </source>
</evidence>
<comment type="function">
    <text evidence="1">One of the essential components for the initiation of protein synthesis. Stabilizes the binding of IF-2 and IF-3 on the 30S subunit to which N-formylmethionyl-tRNA(fMet) subsequently binds. Helps modulate mRNA selection, yielding the 30S pre-initiation complex (PIC). Upon addition of the 50S ribosomal subunit IF-1, IF-2 and IF-3 are released leaving the mature 70S translation initiation complex.</text>
</comment>
<comment type="subunit">
    <text evidence="1">Component of the 30S ribosomal translation pre-initiation complex which assembles on the 30S ribosome in the order IF-2 and IF-3, IF-1 and N-formylmethionyl-tRNA(fMet); mRNA recruitment can occur at any time during PIC assembly.</text>
</comment>
<comment type="subcellular location">
    <subcellularLocation>
        <location evidence="1">Cytoplasm</location>
    </subcellularLocation>
</comment>
<comment type="similarity">
    <text evidence="1">Belongs to the IF-1 family.</text>
</comment>
<name>IF1_SHIDS</name>
<keyword id="KW-0963">Cytoplasm</keyword>
<keyword id="KW-0396">Initiation factor</keyword>
<keyword id="KW-0648">Protein biosynthesis</keyword>
<keyword id="KW-1185">Reference proteome</keyword>
<keyword id="KW-0694">RNA-binding</keyword>
<keyword id="KW-0699">rRNA-binding</keyword>
<accession>Q32E03</accession>
<proteinExistence type="inferred from homology"/>
<gene>
    <name evidence="1" type="primary">infA</name>
    <name type="ordered locus">SDY_2377</name>
</gene>